<reference key="1">
    <citation type="submission" date="2009-03" db="EMBL/GenBank/DDBJ databases">
        <title>Comparison of the complete genome sequences of Rhodococcus erythropolis PR4 and Rhodococcus opacus B4.</title>
        <authorList>
            <person name="Takarada H."/>
            <person name="Sekine M."/>
            <person name="Hosoyama A."/>
            <person name="Yamada R."/>
            <person name="Fujisawa T."/>
            <person name="Omata S."/>
            <person name="Shimizu A."/>
            <person name="Tsukatani N."/>
            <person name="Tanikawa S."/>
            <person name="Fujita N."/>
            <person name="Harayama S."/>
        </authorList>
    </citation>
    <scope>NUCLEOTIDE SEQUENCE [LARGE SCALE GENOMIC DNA]</scope>
    <source>
        <strain>B4</strain>
    </source>
</reference>
<feature type="chain" id="PRO_0000395947" description="Pup--protein ligase">
    <location>
        <begin position="1"/>
        <end position="452"/>
    </location>
</feature>
<feature type="active site" description="Proton acceptor" evidence="1">
    <location>
        <position position="57"/>
    </location>
</feature>
<feature type="binding site" evidence="1">
    <location>
        <position position="9"/>
    </location>
    <ligand>
        <name>Mg(2+)</name>
        <dbReference type="ChEBI" id="CHEBI:18420"/>
    </ligand>
</feature>
<feature type="binding site" evidence="1">
    <location>
        <position position="53"/>
    </location>
    <ligand>
        <name>ATP</name>
        <dbReference type="ChEBI" id="CHEBI:30616"/>
    </ligand>
</feature>
<feature type="binding site" evidence="1">
    <location>
        <position position="55"/>
    </location>
    <ligand>
        <name>Mg(2+)</name>
        <dbReference type="ChEBI" id="CHEBI:18420"/>
    </ligand>
</feature>
<feature type="binding site" evidence="1">
    <location>
        <position position="63"/>
    </location>
    <ligand>
        <name>Mg(2+)</name>
        <dbReference type="ChEBI" id="CHEBI:18420"/>
    </ligand>
</feature>
<feature type="binding site" evidence="1">
    <location>
        <position position="66"/>
    </location>
    <ligand>
        <name>ATP</name>
        <dbReference type="ChEBI" id="CHEBI:30616"/>
    </ligand>
</feature>
<feature type="binding site" evidence="1">
    <location>
        <position position="419"/>
    </location>
    <ligand>
        <name>ATP</name>
        <dbReference type="ChEBI" id="CHEBI:30616"/>
    </ligand>
</feature>
<keyword id="KW-0067">ATP-binding</keyword>
<keyword id="KW-0436">Ligase</keyword>
<keyword id="KW-0460">Magnesium</keyword>
<keyword id="KW-0479">Metal-binding</keyword>
<keyword id="KW-0547">Nucleotide-binding</keyword>
<keyword id="KW-0833">Ubl conjugation pathway</keyword>
<evidence type="ECO:0000255" key="1">
    <source>
        <dbReference type="HAMAP-Rule" id="MF_02111"/>
    </source>
</evidence>
<name>PAFA_RHOOB</name>
<gene>
    <name evidence="1" type="primary">pafA</name>
    <name type="ordered locus">ROP_05790</name>
</gene>
<accession>C1ASP4</accession>
<organism>
    <name type="scientific">Rhodococcus opacus (strain B4)</name>
    <dbReference type="NCBI Taxonomy" id="632772"/>
    <lineage>
        <taxon>Bacteria</taxon>
        <taxon>Bacillati</taxon>
        <taxon>Actinomycetota</taxon>
        <taxon>Actinomycetes</taxon>
        <taxon>Mycobacteriales</taxon>
        <taxon>Nocardiaceae</taxon>
        <taxon>Rhodococcus</taxon>
    </lineage>
</organism>
<comment type="function">
    <text evidence="1">Catalyzes the covalent attachment of the prokaryotic ubiquitin-like protein modifier Pup to the proteasomal substrate proteins, thereby targeting them for proteasomal degradation. This tagging system is termed pupylation. The ligation reaction involves the side-chain carboxylate of the C-terminal glutamate of Pup and the side-chain amino group of a substrate lysine.</text>
</comment>
<comment type="catalytic activity">
    <reaction evidence="1">
        <text>ATP + [prokaryotic ubiquitin-like protein]-L-glutamate + [protein]-L-lysine = ADP + phosphate + N(6)-([prokaryotic ubiquitin-like protein]-gamma-L-glutamyl)-[protein]-L-lysine.</text>
        <dbReference type="EC" id="6.3.1.19"/>
    </reaction>
</comment>
<comment type="pathway">
    <text evidence="1">Protein degradation; proteasomal Pup-dependent pathway.</text>
</comment>
<comment type="pathway">
    <text evidence="1">Protein modification; protein pupylation.</text>
</comment>
<comment type="miscellaneous">
    <text evidence="1">The reaction mechanism probably proceeds via the activation of Pup by phosphorylation of its C-terminal glutamate, which is then subject to nucleophilic attack by the substrate lysine, resulting in an isopeptide bond and the release of phosphate as a good leaving group.</text>
</comment>
<comment type="similarity">
    <text evidence="1">Belongs to the Pup ligase/Pup deamidase family. Pup-conjugating enzyme subfamily.</text>
</comment>
<sequence>MQRRIMGIETEFGVTCTFHGHRRLSPDEVARYLFRRVVSWGRSSNVFLRNGARLYLDVGSHPEYATAECDNLIQLVNHDRAGERVLEELLIDAEQRLAEEGIGGDIYLFKNNTDSAGNSYGCHENFLVARAGEFSRISDVLLPFLVTRQLICGAGKVLQTPKAATFCLSQRAEHIWEGVSSATTRSRPIINTRDEPHADAEKYRRLHVIVGDSNMSESTTMLKVGTAALVLEMIEAGVSFRDFALDNPIRAIREVSHDVTGRRPVRLAGGRQASALDIQREYHARAVEHLQNRDPDPQVTQVVDLWGRMLDAVETQDFAKVDTEIDWVIKRKLFQRYQDRHGFELADPKIAQLDLAYHDIKRGRGVFDVLQRKGLVKRITEDETIEAAVDTPPQTTRAKLRGEFITAAQEAGRDFTVDWVHLKLNDQAQRTVLCKDPFRSVDERVERLIASM</sequence>
<protein>
    <recommendedName>
        <fullName evidence="1">Pup--protein ligase</fullName>
        <ecNumber evidence="1">6.3.1.19</ecNumber>
    </recommendedName>
    <alternativeName>
        <fullName evidence="1">Proteasome accessory factor A</fullName>
    </alternativeName>
    <alternativeName>
        <fullName evidence="1">Pup-conjugating enzyme</fullName>
    </alternativeName>
</protein>
<proteinExistence type="inferred from homology"/>
<dbReference type="EC" id="6.3.1.19" evidence="1"/>
<dbReference type="EMBL" id="AP011115">
    <property type="protein sequence ID" value="BAH48826.1"/>
    <property type="molecule type" value="Genomic_DNA"/>
</dbReference>
<dbReference type="SMR" id="C1ASP4"/>
<dbReference type="STRING" id="632772.ROP_05790"/>
<dbReference type="KEGG" id="rop:ROP_05790"/>
<dbReference type="PATRIC" id="fig|632772.20.peg.637"/>
<dbReference type="HOGENOM" id="CLU_040524_0_1_11"/>
<dbReference type="UniPathway" id="UPA00997"/>
<dbReference type="UniPathway" id="UPA00998"/>
<dbReference type="Proteomes" id="UP000002212">
    <property type="component" value="Chromosome"/>
</dbReference>
<dbReference type="GO" id="GO:0005524">
    <property type="term" value="F:ATP binding"/>
    <property type="evidence" value="ECO:0007669"/>
    <property type="project" value="UniProtKB-UniRule"/>
</dbReference>
<dbReference type="GO" id="GO:0016879">
    <property type="term" value="F:ligase activity, forming carbon-nitrogen bonds"/>
    <property type="evidence" value="ECO:0007669"/>
    <property type="project" value="InterPro"/>
</dbReference>
<dbReference type="GO" id="GO:0000287">
    <property type="term" value="F:magnesium ion binding"/>
    <property type="evidence" value="ECO:0007669"/>
    <property type="project" value="UniProtKB-UniRule"/>
</dbReference>
<dbReference type="GO" id="GO:0019787">
    <property type="term" value="F:ubiquitin-like protein transferase activity"/>
    <property type="evidence" value="ECO:0007669"/>
    <property type="project" value="UniProtKB-UniRule"/>
</dbReference>
<dbReference type="GO" id="GO:0019941">
    <property type="term" value="P:modification-dependent protein catabolic process"/>
    <property type="evidence" value="ECO:0007669"/>
    <property type="project" value="UniProtKB-UniRule"/>
</dbReference>
<dbReference type="GO" id="GO:0010498">
    <property type="term" value="P:proteasomal protein catabolic process"/>
    <property type="evidence" value="ECO:0007669"/>
    <property type="project" value="UniProtKB-UniRule"/>
</dbReference>
<dbReference type="GO" id="GO:0070490">
    <property type="term" value="P:protein pupylation"/>
    <property type="evidence" value="ECO:0007669"/>
    <property type="project" value="UniProtKB-UniRule"/>
</dbReference>
<dbReference type="HAMAP" id="MF_02111">
    <property type="entry name" value="Pup_ligase"/>
    <property type="match status" value="1"/>
</dbReference>
<dbReference type="InterPro" id="IPR022279">
    <property type="entry name" value="Pup_ligase"/>
</dbReference>
<dbReference type="InterPro" id="IPR004347">
    <property type="entry name" value="Pup_ligase/deamidase"/>
</dbReference>
<dbReference type="NCBIfam" id="TIGR03686">
    <property type="entry name" value="pupylate_PafA"/>
    <property type="match status" value="1"/>
</dbReference>
<dbReference type="PANTHER" id="PTHR42307">
    <property type="entry name" value="PUP DEAMIDASE/DEPUPYLASE"/>
    <property type="match status" value="1"/>
</dbReference>
<dbReference type="PANTHER" id="PTHR42307:SF3">
    <property type="entry name" value="PUP--PROTEIN LIGASE"/>
    <property type="match status" value="1"/>
</dbReference>
<dbReference type="Pfam" id="PF03136">
    <property type="entry name" value="Pup_ligase"/>
    <property type="match status" value="1"/>
</dbReference>
<dbReference type="PIRSF" id="PIRSF018077">
    <property type="entry name" value="UCP018077"/>
    <property type="match status" value="1"/>
</dbReference>